<evidence type="ECO:0000255" key="1">
    <source>
        <dbReference type="HAMAP-Rule" id="MF_00204"/>
    </source>
</evidence>
<name>UVRB_STRZT</name>
<feature type="chain" id="PRO_1000200557" description="UvrABC system protein B">
    <location>
        <begin position="1"/>
        <end position="662"/>
    </location>
</feature>
<feature type="domain" description="Helicase ATP-binding" evidence="1">
    <location>
        <begin position="31"/>
        <end position="188"/>
    </location>
</feature>
<feature type="domain" description="Helicase C-terminal" evidence="1">
    <location>
        <begin position="435"/>
        <end position="601"/>
    </location>
</feature>
<feature type="domain" description="UVR" evidence="1">
    <location>
        <begin position="626"/>
        <end position="661"/>
    </location>
</feature>
<feature type="short sequence motif" description="Beta-hairpin">
    <location>
        <begin position="97"/>
        <end position="120"/>
    </location>
</feature>
<feature type="binding site" evidence="1">
    <location>
        <begin position="44"/>
        <end position="51"/>
    </location>
    <ligand>
        <name>ATP</name>
        <dbReference type="ChEBI" id="CHEBI:30616"/>
    </ligand>
</feature>
<reference key="1">
    <citation type="journal article" date="2010" name="Genome Biol.">
        <title>Structure and dynamics of the pan-genome of Streptococcus pneumoniae and closely related species.</title>
        <authorList>
            <person name="Donati C."/>
            <person name="Hiller N.L."/>
            <person name="Tettelin H."/>
            <person name="Muzzi A."/>
            <person name="Croucher N.J."/>
            <person name="Angiuoli S.V."/>
            <person name="Oggioni M."/>
            <person name="Dunning Hotopp J.C."/>
            <person name="Hu F.Z."/>
            <person name="Riley D.R."/>
            <person name="Covacci A."/>
            <person name="Mitchell T.J."/>
            <person name="Bentley S.D."/>
            <person name="Kilian M."/>
            <person name="Ehrlich G.D."/>
            <person name="Rappuoli R."/>
            <person name="Moxon E.R."/>
            <person name="Masignani V."/>
        </authorList>
    </citation>
    <scope>NUCLEOTIDE SEQUENCE [LARGE SCALE GENOMIC DNA]</scope>
    <source>
        <strain>Taiwan19F-14</strain>
    </source>
</reference>
<organism>
    <name type="scientific">Streptococcus pneumoniae (strain Taiwan19F-14)</name>
    <dbReference type="NCBI Taxonomy" id="487213"/>
    <lineage>
        <taxon>Bacteria</taxon>
        <taxon>Bacillati</taxon>
        <taxon>Bacillota</taxon>
        <taxon>Bacilli</taxon>
        <taxon>Lactobacillales</taxon>
        <taxon>Streptococcaceae</taxon>
        <taxon>Streptococcus</taxon>
    </lineage>
</organism>
<keyword id="KW-0067">ATP-binding</keyword>
<keyword id="KW-0963">Cytoplasm</keyword>
<keyword id="KW-0227">DNA damage</keyword>
<keyword id="KW-0228">DNA excision</keyword>
<keyword id="KW-0234">DNA repair</keyword>
<keyword id="KW-0267">Excision nuclease</keyword>
<keyword id="KW-0347">Helicase</keyword>
<keyword id="KW-0378">Hydrolase</keyword>
<keyword id="KW-0547">Nucleotide-binding</keyword>
<keyword id="KW-0742">SOS response</keyword>
<dbReference type="EMBL" id="CP000921">
    <property type="protein sequence ID" value="ACO22232.1"/>
    <property type="molecule type" value="Genomic_DNA"/>
</dbReference>
<dbReference type="RefSeq" id="WP_000610410.1">
    <property type="nucleotide sequence ID" value="NC_012469.1"/>
</dbReference>
<dbReference type="SMR" id="C1CR65"/>
<dbReference type="KEGG" id="snt:SPT_0990"/>
<dbReference type="HOGENOM" id="CLU_009621_2_1_9"/>
<dbReference type="GO" id="GO:0005737">
    <property type="term" value="C:cytoplasm"/>
    <property type="evidence" value="ECO:0007669"/>
    <property type="project" value="UniProtKB-SubCell"/>
</dbReference>
<dbReference type="GO" id="GO:0009380">
    <property type="term" value="C:excinuclease repair complex"/>
    <property type="evidence" value="ECO:0007669"/>
    <property type="project" value="InterPro"/>
</dbReference>
<dbReference type="GO" id="GO:0005524">
    <property type="term" value="F:ATP binding"/>
    <property type="evidence" value="ECO:0007669"/>
    <property type="project" value="UniProtKB-UniRule"/>
</dbReference>
<dbReference type="GO" id="GO:0016887">
    <property type="term" value="F:ATP hydrolysis activity"/>
    <property type="evidence" value="ECO:0007669"/>
    <property type="project" value="InterPro"/>
</dbReference>
<dbReference type="GO" id="GO:0003677">
    <property type="term" value="F:DNA binding"/>
    <property type="evidence" value="ECO:0007669"/>
    <property type="project" value="UniProtKB-UniRule"/>
</dbReference>
<dbReference type="GO" id="GO:0009381">
    <property type="term" value="F:excinuclease ABC activity"/>
    <property type="evidence" value="ECO:0007669"/>
    <property type="project" value="UniProtKB-UniRule"/>
</dbReference>
<dbReference type="GO" id="GO:0004386">
    <property type="term" value="F:helicase activity"/>
    <property type="evidence" value="ECO:0007669"/>
    <property type="project" value="UniProtKB-KW"/>
</dbReference>
<dbReference type="GO" id="GO:0006289">
    <property type="term" value="P:nucleotide-excision repair"/>
    <property type="evidence" value="ECO:0007669"/>
    <property type="project" value="UniProtKB-UniRule"/>
</dbReference>
<dbReference type="GO" id="GO:0009432">
    <property type="term" value="P:SOS response"/>
    <property type="evidence" value="ECO:0007669"/>
    <property type="project" value="UniProtKB-UniRule"/>
</dbReference>
<dbReference type="CDD" id="cd17916">
    <property type="entry name" value="DEXHc_UvrB"/>
    <property type="match status" value="1"/>
</dbReference>
<dbReference type="CDD" id="cd18790">
    <property type="entry name" value="SF2_C_UvrB"/>
    <property type="match status" value="1"/>
</dbReference>
<dbReference type="Gene3D" id="3.40.50.300">
    <property type="entry name" value="P-loop containing nucleotide triphosphate hydrolases"/>
    <property type="match status" value="3"/>
</dbReference>
<dbReference type="Gene3D" id="4.10.860.10">
    <property type="entry name" value="UVR domain"/>
    <property type="match status" value="1"/>
</dbReference>
<dbReference type="HAMAP" id="MF_00204">
    <property type="entry name" value="UvrB"/>
    <property type="match status" value="1"/>
</dbReference>
<dbReference type="InterPro" id="IPR006935">
    <property type="entry name" value="Helicase/UvrB_N"/>
</dbReference>
<dbReference type="InterPro" id="IPR014001">
    <property type="entry name" value="Helicase_ATP-bd"/>
</dbReference>
<dbReference type="InterPro" id="IPR001650">
    <property type="entry name" value="Helicase_C-like"/>
</dbReference>
<dbReference type="InterPro" id="IPR027417">
    <property type="entry name" value="P-loop_NTPase"/>
</dbReference>
<dbReference type="InterPro" id="IPR001943">
    <property type="entry name" value="UVR_dom"/>
</dbReference>
<dbReference type="InterPro" id="IPR036876">
    <property type="entry name" value="UVR_dom_sf"/>
</dbReference>
<dbReference type="InterPro" id="IPR004807">
    <property type="entry name" value="UvrB"/>
</dbReference>
<dbReference type="InterPro" id="IPR041471">
    <property type="entry name" value="UvrB_inter"/>
</dbReference>
<dbReference type="InterPro" id="IPR024759">
    <property type="entry name" value="UvrB_YAD/RRR_dom"/>
</dbReference>
<dbReference type="NCBIfam" id="NF003673">
    <property type="entry name" value="PRK05298.1"/>
    <property type="match status" value="1"/>
</dbReference>
<dbReference type="NCBIfam" id="TIGR00631">
    <property type="entry name" value="uvrb"/>
    <property type="match status" value="1"/>
</dbReference>
<dbReference type="PANTHER" id="PTHR24029">
    <property type="entry name" value="UVRABC SYSTEM PROTEIN B"/>
    <property type="match status" value="1"/>
</dbReference>
<dbReference type="PANTHER" id="PTHR24029:SF0">
    <property type="entry name" value="UVRABC SYSTEM PROTEIN B"/>
    <property type="match status" value="1"/>
</dbReference>
<dbReference type="Pfam" id="PF00271">
    <property type="entry name" value="Helicase_C"/>
    <property type="match status" value="1"/>
</dbReference>
<dbReference type="Pfam" id="PF04851">
    <property type="entry name" value="ResIII"/>
    <property type="match status" value="1"/>
</dbReference>
<dbReference type="Pfam" id="PF02151">
    <property type="entry name" value="UVR"/>
    <property type="match status" value="1"/>
</dbReference>
<dbReference type="Pfam" id="PF12344">
    <property type="entry name" value="UvrB"/>
    <property type="match status" value="1"/>
</dbReference>
<dbReference type="Pfam" id="PF17757">
    <property type="entry name" value="UvrB_inter"/>
    <property type="match status" value="1"/>
</dbReference>
<dbReference type="SMART" id="SM00487">
    <property type="entry name" value="DEXDc"/>
    <property type="match status" value="1"/>
</dbReference>
<dbReference type="SMART" id="SM00490">
    <property type="entry name" value="HELICc"/>
    <property type="match status" value="1"/>
</dbReference>
<dbReference type="SUPFAM" id="SSF46600">
    <property type="entry name" value="C-terminal UvrC-binding domain of UvrB"/>
    <property type="match status" value="1"/>
</dbReference>
<dbReference type="SUPFAM" id="SSF52540">
    <property type="entry name" value="P-loop containing nucleoside triphosphate hydrolases"/>
    <property type="match status" value="2"/>
</dbReference>
<dbReference type="PROSITE" id="PS51192">
    <property type="entry name" value="HELICASE_ATP_BIND_1"/>
    <property type="match status" value="1"/>
</dbReference>
<dbReference type="PROSITE" id="PS51194">
    <property type="entry name" value="HELICASE_CTER"/>
    <property type="match status" value="1"/>
</dbReference>
<dbReference type="PROSITE" id="PS50151">
    <property type="entry name" value="UVR"/>
    <property type="match status" value="1"/>
</dbReference>
<gene>
    <name evidence="1" type="primary">uvrB</name>
    <name type="ordered locus">SPT_0990</name>
</gene>
<sequence>MINRITDNKFKLVSKYQPSGDQPQAIEQLVDNIEGGEKAQILMGATGTGKTYTMSQVISKVNKPTLVIAHNKTLAGQLYGEFKEFFPENAVEYFVSYYDYYQPEAYVPSSDTYIEKDSSVNDEIDKLRHSATSALLERNDVIVVASVSCIYGLGSPKEYADSVVSLRPGLEISRDKLLNDLVDIQFERNDIDFQRGRFRVRGDVVEIFPASRDEHAFRVEFFGDEIDRIREVEALTGQVLGEVDHLAIFPATHFVTNDDHMEVAIAKIQAELEEQLAVFEKEGKLLEAQRLKQRTEYDIEMLREMGYTNGVENYSRHMDGRSEGEPPYTLLDFFPDDFLIMIDESHMTMGQIKGMYNGDRSRKEMLVNYGFRLPSALDNRPLRREEFESHVHQIVYVSATPGDYENEQTETVIEQIIRPTGLLDPEVEVRPTMGQIDDLLGEINARVEKNERTFITTLTKKMAEDLTDYFKEMGIKVKYMHSDIKTLERTEIIRDLRLGVFDVLVGINLLREGIDVPEVSLVAILDADKEGFLRNERGLIQTIGRAARNSEGHVIMYADTVTQSMQRAIDETARRRKIQMAYNEEHGIVPQTIKKEIRDLIAVTKAVSKEEDKEVDINSLNKQERKELVKKLEKQMQEAVEVLDFELAAQIRDMMLEVKALD</sequence>
<accession>C1CR65</accession>
<comment type="function">
    <text evidence="1">The UvrABC repair system catalyzes the recognition and processing of DNA lesions. A damage recognition complex composed of 2 UvrA and 2 UvrB subunits scans DNA for abnormalities. Upon binding of the UvrA(2)B(2) complex to a putative damaged site, the DNA wraps around one UvrB monomer. DNA wrap is dependent on ATP binding by UvrB and probably causes local melting of the DNA helix, facilitating insertion of UvrB beta-hairpin between the DNA strands. Then UvrB probes one DNA strand for the presence of a lesion. If a lesion is found the UvrA subunits dissociate and the UvrB-DNA preincision complex is formed. This complex is subsequently bound by UvrC and the second UvrB is released. If no lesion is found, the DNA wraps around the other UvrB subunit that will check the other stand for damage.</text>
</comment>
<comment type="subunit">
    <text evidence="1">Forms a heterotetramer with UvrA during the search for lesions. Interacts with UvrC in an incision complex.</text>
</comment>
<comment type="subcellular location">
    <subcellularLocation>
        <location evidence="1">Cytoplasm</location>
    </subcellularLocation>
</comment>
<comment type="domain">
    <text evidence="1">The beta-hairpin motif is involved in DNA binding.</text>
</comment>
<comment type="similarity">
    <text evidence="1">Belongs to the UvrB family.</text>
</comment>
<protein>
    <recommendedName>
        <fullName evidence="1">UvrABC system protein B</fullName>
        <shortName evidence="1">Protein UvrB</shortName>
    </recommendedName>
    <alternativeName>
        <fullName evidence="1">Excinuclease ABC subunit B</fullName>
    </alternativeName>
</protein>
<proteinExistence type="inferred from homology"/>